<organism>
    <name type="scientific">Rattus norvegicus</name>
    <name type="common">Rat</name>
    <dbReference type="NCBI Taxonomy" id="10116"/>
    <lineage>
        <taxon>Eukaryota</taxon>
        <taxon>Metazoa</taxon>
        <taxon>Chordata</taxon>
        <taxon>Craniata</taxon>
        <taxon>Vertebrata</taxon>
        <taxon>Euteleostomi</taxon>
        <taxon>Mammalia</taxon>
        <taxon>Eutheria</taxon>
        <taxon>Euarchontoglires</taxon>
        <taxon>Glires</taxon>
        <taxon>Rodentia</taxon>
        <taxon>Myomorpha</taxon>
        <taxon>Muroidea</taxon>
        <taxon>Muridae</taxon>
        <taxon>Murinae</taxon>
        <taxon>Rattus</taxon>
    </lineage>
</organism>
<protein>
    <recommendedName>
        <fullName>Voltage-dependent T-type calcium channel subunit alpha-1G</fullName>
    </recommendedName>
    <alternativeName>
        <fullName>Voltage-gated calcium channel subunit alpha Cav3.1</fullName>
    </alternativeName>
</protein>
<comment type="function">
    <text evidence="5 6">Voltage-sensitive calcium channels (VSCC) mediate the entry of calcium ions into excitable cells and are also involved in a variety of calcium-dependent processes, including muscle contraction, hormone or neurotransmitter release, gene expression, cell motility, cell division and cell death. The isoform alpha-1G gives rise to T-type calcium currents. T-type calcium channels belong to the 'low-voltage activated (LVA)' group and are strongly blocked by nickel and mibefradil. A particularity of this type of channels is an opening at quite negative potentials and a voltage-dependent inactivation. T-type channels serve pacemaking functions in both central neurons and cardiac nodal cells and support calcium signaling in secretory cells and vascular smooth muscle. They may also be involved in the modulation of firing patterns of neurons which is important for information processing as well as in cell growth processes.</text>
</comment>
<comment type="catalytic activity">
    <reaction evidence="5 6">
        <text>Ca(2+)(in) = Ca(2+)(out)</text>
        <dbReference type="Rhea" id="RHEA:29671"/>
        <dbReference type="ChEBI" id="CHEBI:29108"/>
    </reaction>
</comment>
<comment type="subcellular location">
    <subcellularLocation>
        <location evidence="2">Cell membrane</location>
        <topology evidence="3">Multi-pass membrane protein</topology>
    </subcellularLocation>
    <subcellularLocation>
        <location evidence="2">Cytoplasm</location>
    </subcellularLocation>
</comment>
<comment type="tissue specificity">
    <text>Highly expressed in brain. Moderate expression in heart; low expression in placenta, kidney and lung.</text>
</comment>
<comment type="domain">
    <text>Each of the four internal repeats contains five hydrophobic transmembrane segments (S1, S2, S3, S5, S6) and one positively charged transmembrane segment (S4). S4 segments probably represent the voltage-sensor and are characterized by a series of positively charged amino acids at every third position.</text>
</comment>
<comment type="PTM">
    <text>In response to raising of intracellular calcium, the T-type channels are activated by CaM-kinase II.</text>
</comment>
<comment type="similarity">
    <text evidence="7">Belongs to the calcium channel alpha-1 subunit (TC 1.A.1.11) family. CACNA1G subfamily.</text>
</comment>
<accession>O54898</accession>
<accession>Q548R1</accession>
<dbReference type="EMBL" id="AF027984">
    <property type="protein sequence ID" value="AAC67372.1"/>
    <property type="molecule type" value="mRNA"/>
</dbReference>
<dbReference type="EMBL" id="AF290212">
    <property type="protein sequence ID" value="AAG35186.2"/>
    <property type="molecule type" value="mRNA"/>
</dbReference>
<dbReference type="PIR" id="T09053">
    <property type="entry name" value="T09053"/>
</dbReference>
<dbReference type="SMR" id="O54898"/>
<dbReference type="BioGRID" id="248334">
    <property type="interactions" value="1"/>
</dbReference>
<dbReference type="FunCoup" id="O54898">
    <property type="interactions" value="1958"/>
</dbReference>
<dbReference type="STRING" id="10116.ENSRNOP00000072061"/>
<dbReference type="BindingDB" id="O54898"/>
<dbReference type="ChEMBL" id="CHEMBL4257"/>
<dbReference type="DrugCentral" id="O54898"/>
<dbReference type="GuidetoPHARMACOLOGY" id="535"/>
<dbReference type="GlyCosmos" id="O54898">
    <property type="glycosylation" value="8 sites, No reported glycans"/>
</dbReference>
<dbReference type="GlyGen" id="O54898">
    <property type="glycosylation" value="10 sites"/>
</dbReference>
<dbReference type="iPTMnet" id="O54898"/>
<dbReference type="PhosphoSitePlus" id="O54898"/>
<dbReference type="PaxDb" id="10116-ENSRNOP00000061436"/>
<dbReference type="AGR" id="RGD:68942"/>
<dbReference type="RGD" id="68942">
    <property type="gene designation" value="Cacna1g"/>
</dbReference>
<dbReference type="eggNOG" id="KOG2302">
    <property type="taxonomic scope" value="Eukaryota"/>
</dbReference>
<dbReference type="InParanoid" id="O54898"/>
<dbReference type="OrthoDB" id="416585at2759"/>
<dbReference type="PhylomeDB" id="O54898"/>
<dbReference type="PRO" id="PR:O54898"/>
<dbReference type="Proteomes" id="UP000002494">
    <property type="component" value="Unplaced"/>
</dbReference>
<dbReference type="GO" id="GO:0044297">
    <property type="term" value="C:cell body"/>
    <property type="evidence" value="ECO:0000314"/>
    <property type="project" value="RGD"/>
</dbReference>
<dbReference type="GO" id="GO:0005737">
    <property type="term" value="C:cytoplasm"/>
    <property type="evidence" value="ECO:0000266"/>
    <property type="project" value="RGD"/>
</dbReference>
<dbReference type="GO" id="GO:0030425">
    <property type="term" value="C:dendrite"/>
    <property type="evidence" value="ECO:0000314"/>
    <property type="project" value="RGD"/>
</dbReference>
<dbReference type="GO" id="GO:0043005">
    <property type="term" value="C:neuron projection"/>
    <property type="evidence" value="ECO:0000318"/>
    <property type="project" value="GO_Central"/>
</dbReference>
<dbReference type="GO" id="GO:0043025">
    <property type="term" value="C:neuronal cell body"/>
    <property type="evidence" value="ECO:0000314"/>
    <property type="project" value="RGD"/>
</dbReference>
<dbReference type="GO" id="GO:0048471">
    <property type="term" value="C:perinuclear region of cytoplasm"/>
    <property type="evidence" value="ECO:0000314"/>
    <property type="project" value="RGD"/>
</dbReference>
<dbReference type="GO" id="GO:0005886">
    <property type="term" value="C:plasma membrane"/>
    <property type="evidence" value="ECO:0000266"/>
    <property type="project" value="RGD"/>
</dbReference>
<dbReference type="GO" id="GO:0045202">
    <property type="term" value="C:synapse"/>
    <property type="evidence" value="ECO:0007669"/>
    <property type="project" value="GOC"/>
</dbReference>
<dbReference type="GO" id="GO:0005891">
    <property type="term" value="C:voltage-gated calcium channel complex"/>
    <property type="evidence" value="ECO:0000250"/>
    <property type="project" value="BHF-UCL"/>
</dbReference>
<dbReference type="GO" id="GO:0001518">
    <property type="term" value="C:voltage-gated sodium channel complex"/>
    <property type="evidence" value="ECO:0000318"/>
    <property type="project" value="GO_Central"/>
</dbReference>
<dbReference type="GO" id="GO:0008332">
    <property type="term" value="F:low voltage-gated calcium channel activity"/>
    <property type="evidence" value="ECO:0000314"/>
    <property type="project" value="RGD"/>
</dbReference>
<dbReference type="GO" id="GO:0097110">
    <property type="term" value="F:scaffold protein binding"/>
    <property type="evidence" value="ECO:0000266"/>
    <property type="project" value="RGD"/>
</dbReference>
<dbReference type="GO" id="GO:0005245">
    <property type="term" value="F:voltage-gated calcium channel activity"/>
    <property type="evidence" value="ECO:0000314"/>
    <property type="project" value="UniProtKB"/>
</dbReference>
<dbReference type="GO" id="GO:0086056">
    <property type="term" value="F:voltage-gated calcium channel activity involved in AV node cell action potential"/>
    <property type="evidence" value="ECO:0000250"/>
    <property type="project" value="BHF-UCL"/>
</dbReference>
<dbReference type="GO" id="GO:0086059">
    <property type="term" value="F:voltage-gated calcium channel activity involved SA node cell action potential"/>
    <property type="evidence" value="ECO:0000250"/>
    <property type="project" value="BHF-UCL"/>
</dbReference>
<dbReference type="GO" id="GO:0005248">
    <property type="term" value="F:voltage-gated sodium channel activity"/>
    <property type="evidence" value="ECO:0000318"/>
    <property type="project" value="GO_Central"/>
</dbReference>
<dbReference type="GO" id="GO:0001508">
    <property type="term" value="P:action potential"/>
    <property type="evidence" value="ECO:0000266"/>
    <property type="project" value="RGD"/>
</dbReference>
<dbReference type="GO" id="GO:0014824">
    <property type="term" value="P:artery smooth muscle contraction"/>
    <property type="evidence" value="ECO:0000315"/>
    <property type="project" value="RGD"/>
</dbReference>
<dbReference type="GO" id="GO:0086016">
    <property type="term" value="P:AV node cell action potential"/>
    <property type="evidence" value="ECO:0000250"/>
    <property type="project" value="BHF-UCL"/>
</dbReference>
<dbReference type="GO" id="GO:0086027">
    <property type="term" value="P:AV node cell to bundle of His cell signaling"/>
    <property type="evidence" value="ECO:0000250"/>
    <property type="project" value="BHF-UCL"/>
</dbReference>
<dbReference type="GO" id="GO:0070509">
    <property type="term" value="P:calcium ion import"/>
    <property type="evidence" value="ECO:0000314"/>
    <property type="project" value="RGD"/>
</dbReference>
<dbReference type="GO" id="GO:0070588">
    <property type="term" value="P:calcium ion transmembrane transport"/>
    <property type="evidence" value="ECO:0000266"/>
    <property type="project" value="RGD"/>
</dbReference>
<dbReference type="GO" id="GO:0060402">
    <property type="term" value="P:calcium ion transport into cytosol"/>
    <property type="evidence" value="ECO:0000314"/>
    <property type="project" value="RGD"/>
</dbReference>
<dbReference type="GO" id="GO:0086002">
    <property type="term" value="P:cardiac muscle cell action potential involved in contraction"/>
    <property type="evidence" value="ECO:0000250"/>
    <property type="project" value="BHF-UCL"/>
</dbReference>
<dbReference type="GO" id="GO:0071549">
    <property type="term" value="P:cellular response to dexamethasone stimulus"/>
    <property type="evidence" value="ECO:0000270"/>
    <property type="project" value="RGD"/>
</dbReference>
<dbReference type="GO" id="GO:0007268">
    <property type="term" value="P:chemical synaptic transmission"/>
    <property type="evidence" value="ECO:0000266"/>
    <property type="project" value="RGD"/>
</dbReference>
<dbReference type="GO" id="GO:0086010">
    <property type="term" value="P:membrane depolarization during action potential"/>
    <property type="evidence" value="ECO:0000318"/>
    <property type="project" value="GO_Central"/>
</dbReference>
<dbReference type="GO" id="GO:0086045">
    <property type="term" value="P:membrane depolarization during AV node cell action potential"/>
    <property type="evidence" value="ECO:0000250"/>
    <property type="project" value="BHF-UCL"/>
</dbReference>
<dbReference type="GO" id="GO:0086046">
    <property type="term" value="P:membrane depolarization during SA node cell action potential"/>
    <property type="evidence" value="ECO:0000250"/>
    <property type="project" value="BHF-UCL"/>
</dbReference>
<dbReference type="GO" id="GO:0045956">
    <property type="term" value="P:positive regulation of calcium ion-dependent exocytosis"/>
    <property type="evidence" value="ECO:0000315"/>
    <property type="project" value="RGD"/>
</dbReference>
<dbReference type="GO" id="GO:0007204">
    <property type="term" value="P:positive regulation of cytosolic calcium ion concentration"/>
    <property type="evidence" value="ECO:0000315"/>
    <property type="project" value="RGD"/>
</dbReference>
<dbReference type="GO" id="GO:0060371">
    <property type="term" value="P:regulation of atrial cardiac muscle cell membrane depolarization"/>
    <property type="evidence" value="ECO:0000266"/>
    <property type="project" value="RGD"/>
</dbReference>
<dbReference type="GO" id="GO:0051924">
    <property type="term" value="P:regulation of calcium ion transport"/>
    <property type="evidence" value="ECO:0000315"/>
    <property type="project" value="RGD"/>
</dbReference>
<dbReference type="GO" id="GO:0002027">
    <property type="term" value="P:regulation of heart rate"/>
    <property type="evidence" value="ECO:0000266"/>
    <property type="project" value="RGD"/>
</dbReference>
<dbReference type="GO" id="GO:0086091">
    <property type="term" value="P:regulation of heart rate by cardiac conduction"/>
    <property type="evidence" value="ECO:0000250"/>
    <property type="project" value="BHF-UCL"/>
</dbReference>
<dbReference type="GO" id="GO:0042391">
    <property type="term" value="P:regulation of membrane potential"/>
    <property type="evidence" value="ECO:0000266"/>
    <property type="project" value="RGD"/>
</dbReference>
<dbReference type="GO" id="GO:0010045">
    <property type="term" value="P:response to nickel cation"/>
    <property type="evidence" value="ECO:0000266"/>
    <property type="project" value="RGD"/>
</dbReference>
<dbReference type="GO" id="GO:0086015">
    <property type="term" value="P:SA node cell action potential"/>
    <property type="evidence" value="ECO:0000250"/>
    <property type="project" value="BHF-UCL"/>
</dbReference>
<dbReference type="GO" id="GO:0086018">
    <property type="term" value="P:SA node cell to atrial cardiac muscle cell signaling"/>
    <property type="evidence" value="ECO:0000250"/>
    <property type="project" value="BHF-UCL"/>
</dbReference>
<dbReference type="FunFam" id="1.10.287.70:FF:000014">
    <property type="entry name" value="Voltage-dependent T-type calcium channel subunit alpha"/>
    <property type="match status" value="1"/>
</dbReference>
<dbReference type="FunFam" id="1.10.287.70:FF:000018">
    <property type="entry name" value="Voltage-dependent T-type calcium channel subunit alpha"/>
    <property type="match status" value="1"/>
</dbReference>
<dbReference type="FunFam" id="1.10.287.70:FF:000029">
    <property type="entry name" value="Voltage-dependent T-type calcium channel subunit alpha"/>
    <property type="match status" value="1"/>
</dbReference>
<dbReference type="FunFam" id="1.10.287.70:FF:000032">
    <property type="entry name" value="Voltage-dependent T-type calcium channel subunit alpha"/>
    <property type="match status" value="1"/>
</dbReference>
<dbReference type="FunFam" id="1.20.120.350:FF:000007">
    <property type="entry name" value="Voltage-dependent T-type calcium channel subunit alpha"/>
    <property type="match status" value="1"/>
</dbReference>
<dbReference type="FunFam" id="1.20.120.350:FF:000008">
    <property type="entry name" value="Voltage-dependent T-type calcium channel subunit alpha"/>
    <property type="match status" value="1"/>
</dbReference>
<dbReference type="FunFam" id="1.20.120.350:FF:000009">
    <property type="entry name" value="Voltage-dependent T-type calcium channel subunit alpha"/>
    <property type="match status" value="1"/>
</dbReference>
<dbReference type="FunFam" id="1.20.120.350:FF:000012">
    <property type="entry name" value="Voltage-dependent T-type calcium channel subunit alpha"/>
    <property type="match status" value="1"/>
</dbReference>
<dbReference type="Gene3D" id="1.10.287.70">
    <property type="match status" value="4"/>
</dbReference>
<dbReference type="Gene3D" id="1.20.120.350">
    <property type="entry name" value="Voltage-gated potassium channels. Chain C"/>
    <property type="match status" value="4"/>
</dbReference>
<dbReference type="InterPro" id="IPR005821">
    <property type="entry name" value="Ion_trans_dom"/>
</dbReference>
<dbReference type="InterPro" id="IPR050599">
    <property type="entry name" value="VDCC_alpha-1_subunit"/>
</dbReference>
<dbReference type="InterPro" id="IPR005445">
    <property type="entry name" value="VDCC_T_a1"/>
</dbReference>
<dbReference type="InterPro" id="IPR027359">
    <property type="entry name" value="Volt_channel_dom_sf"/>
</dbReference>
<dbReference type="PANTHER" id="PTHR45628">
    <property type="entry name" value="VOLTAGE-DEPENDENT CALCIUM CHANNEL TYPE A SUBUNIT ALPHA-1"/>
    <property type="match status" value="1"/>
</dbReference>
<dbReference type="PANTHER" id="PTHR45628:SF33">
    <property type="entry name" value="VOLTAGE-DEPENDENT T-TYPE CALCIUM CHANNEL SUBUNIT ALPHA-1G"/>
    <property type="match status" value="1"/>
</dbReference>
<dbReference type="Pfam" id="PF00520">
    <property type="entry name" value="Ion_trans"/>
    <property type="match status" value="4"/>
</dbReference>
<dbReference type="PRINTS" id="PR01629">
    <property type="entry name" value="TVDCCALPHA1"/>
</dbReference>
<dbReference type="SUPFAM" id="SSF81324">
    <property type="entry name" value="Voltage-gated potassium channels"/>
    <property type="match status" value="4"/>
</dbReference>
<evidence type="ECO:0000250" key="1"/>
<evidence type="ECO:0000250" key="2">
    <source>
        <dbReference type="UniProtKB" id="O43497"/>
    </source>
</evidence>
<evidence type="ECO:0000255" key="3"/>
<evidence type="ECO:0000256" key="4">
    <source>
        <dbReference type="SAM" id="MobiDB-lite"/>
    </source>
</evidence>
<evidence type="ECO:0000269" key="5">
    <source>
    </source>
</evidence>
<evidence type="ECO:0000269" key="6">
    <source>
    </source>
</evidence>
<evidence type="ECO:0000305" key="7"/>
<evidence type="ECO:0007744" key="8">
    <source>
    </source>
</evidence>
<proteinExistence type="evidence at protein level"/>
<keyword id="KW-0106">Calcium</keyword>
<keyword id="KW-0107">Calcium channel</keyword>
<keyword id="KW-0109">Calcium transport</keyword>
<keyword id="KW-1003">Cell membrane</keyword>
<keyword id="KW-0963">Cytoplasm</keyword>
<keyword id="KW-0325">Glycoprotein</keyword>
<keyword id="KW-0407">Ion channel</keyword>
<keyword id="KW-0406">Ion transport</keyword>
<keyword id="KW-0472">Membrane</keyword>
<keyword id="KW-0597">Phosphoprotein</keyword>
<keyword id="KW-1185">Reference proteome</keyword>
<keyword id="KW-0677">Repeat</keyword>
<keyword id="KW-0812">Transmembrane</keyword>
<keyword id="KW-1133">Transmembrane helix</keyword>
<keyword id="KW-0813">Transport</keyword>
<keyword id="KW-0851">Voltage-gated channel</keyword>
<gene>
    <name type="primary">Cacna1g</name>
</gene>
<reference key="1">
    <citation type="journal article" date="1998" name="Nature">
        <title>Molecular characterization of a neuronal low-voltage-activated T-type calcium channel.</title>
        <authorList>
            <person name="Perez-Reyes E."/>
            <person name="Cribbs L.L."/>
            <person name="Daud A."/>
            <person name="Lacerda A.E."/>
            <person name="Barclay J."/>
            <person name="Williamson M.P."/>
            <person name="Fox M."/>
            <person name="Rees M."/>
            <person name="Lee J.-H."/>
        </authorList>
    </citation>
    <scope>NUCLEOTIDE SEQUENCE [MRNA]</scope>
    <scope>FUNCTION</scope>
    <scope>TRANSPORTER ACTIVITY</scope>
    <source>
        <strain>Sprague-Dawley</strain>
        <tissue>Brain</tissue>
    </source>
</reference>
<reference key="2">
    <citation type="journal article" date="2001" name="J. Biol. Chem.">
        <title>Molecular and functional characterization of a family of rat brain T-type calcium channels.</title>
        <authorList>
            <person name="McRory J.E."/>
            <person name="Santi C.M."/>
            <person name="Hamming K.S.C."/>
            <person name="Mezeyova J."/>
            <person name="Sutton K.G."/>
            <person name="Baillie D.L."/>
            <person name="Stea A."/>
            <person name="Snutch T.P."/>
        </authorList>
    </citation>
    <scope>NUCLEOTIDE SEQUENCE [MRNA]</scope>
    <scope>FUNCTION</scope>
    <scope>TRANSPORTER ACTIVITY</scope>
    <source>
        <tissue>Brain</tissue>
    </source>
</reference>
<reference key="3">
    <citation type="journal article" date="2012" name="Nat. Commun.">
        <title>Quantitative maps of protein phosphorylation sites across 14 different rat organs and tissues.</title>
        <authorList>
            <person name="Lundby A."/>
            <person name="Secher A."/>
            <person name="Lage K."/>
            <person name="Nordsborg N.B."/>
            <person name="Dmytriyev A."/>
            <person name="Lundby C."/>
            <person name="Olsen J.V."/>
        </authorList>
    </citation>
    <scope>PHOSPHORYLATION [LARGE SCALE ANALYSIS] AT SER-467; SER-716; SER-1118; SER-1124 AND SER-1125</scope>
    <scope>IDENTIFICATION BY MASS SPECTROMETRY [LARGE SCALE ANALYSIS]</scope>
</reference>
<name>CAC1G_RAT</name>
<feature type="chain" id="PRO_0000053953" description="Voltage-dependent T-type calcium channel subunit alpha-1G">
    <location>
        <begin position="1"/>
        <end position="2254"/>
    </location>
</feature>
<feature type="topological domain" description="Cytoplasmic" evidence="3">
    <location>
        <begin position="1"/>
        <end position="80"/>
    </location>
</feature>
<feature type="transmembrane region" description="Helical; Name=S1 of repeat I">
    <location>
        <begin position="81"/>
        <end position="101"/>
    </location>
</feature>
<feature type="topological domain" description="Extracellular" evidence="3">
    <location>
        <begin position="102"/>
        <end position="119"/>
    </location>
</feature>
<feature type="transmembrane region" description="Helical; Name=S2 of repeat I" evidence="3">
    <location>
        <begin position="120"/>
        <end position="141"/>
    </location>
</feature>
<feature type="topological domain" description="Cytoplasmic" evidence="3">
    <location>
        <begin position="142"/>
        <end position="150"/>
    </location>
</feature>
<feature type="transmembrane region" description="Helical; Name=S3 of repeat I">
    <location>
        <begin position="151"/>
        <end position="170"/>
    </location>
</feature>
<feature type="topological domain" description="Extracellular" evidence="3">
    <location>
        <begin position="171"/>
        <end position="175"/>
    </location>
</feature>
<feature type="transmembrane region" description="Helical; Name=S4 of repeat I">
    <location>
        <begin position="176"/>
        <end position="193"/>
    </location>
</feature>
<feature type="topological domain" description="Cytoplasmic" evidence="3">
    <location>
        <begin position="194"/>
        <end position="213"/>
    </location>
</feature>
<feature type="transmembrane region" description="Helical; Name=S5 of repeat I" evidence="3">
    <location>
        <begin position="214"/>
        <end position="234"/>
    </location>
</feature>
<feature type="topological domain" description="Extracellular" evidence="3">
    <location>
        <begin position="235"/>
        <end position="370"/>
    </location>
</feature>
<feature type="transmembrane region" description="Helical; Name=S6 of repeat I">
    <location>
        <begin position="371"/>
        <end position="395"/>
    </location>
</feature>
<feature type="topological domain" description="Cytoplasmic" evidence="3">
    <location>
        <begin position="396"/>
        <end position="744"/>
    </location>
</feature>
<feature type="transmembrane region" description="Helical; Name=S1 of repeat II" evidence="3">
    <location>
        <begin position="745"/>
        <end position="765"/>
    </location>
</feature>
<feature type="topological domain" description="Extracellular" evidence="3">
    <location>
        <begin position="766"/>
        <end position="778"/>
    </location>
</feature>
<feature type="transmembrane region" description="Helical; Name=S2 of repeat II" evidence="3">
    <location>
        <begin position="779"/>
        <end position="800"/>
    </location>
</feature>
<feature type="topological domain" description="Cytoplasmic" evidence="3">
    <location>
        <begin position="801"/>
        <end position="806"/>
    </location>
</feature>
<feature type="transmembrane region" description="Helical; Name=S3 of repeat II" evidence="3">
    <location>
        <begin position="807"/>
        <end position="825"/>
    </location>
</feature>
<feature type="topological domain" description="Extracellular" evidence="3">
    <location>
        <begin position="826"/>
        <end position="833"/>
    </location>
</feature>
<feature type="transmembrane region" description="Helical; Name=S4 of repeat II" evidence="3">
    <location>
        <begin position="834"/>
        <end position="857"/>
    </location>
</feature>
<feature type="topological domain" description="Cytoplasmic" evidence="3">
    <location>
        <begin position="858"/>
        <end position="868"/>
    </location>
</feature>
<feature type="transmembrane region" description="Helical; Name=S5 of repeat II" evidence="3">
    <location>
        <begin position="869"/>
        <end position="889"/>
    </location>
</feature>
<feature type="topological domain" description="Extracellular" evidence="3">
    <location>
        <begin position="890"/>
        <end position="940"/>
    </location>
</feature>
<feature type="transmembrane region" description="Helical; Name=S6 of repeat II" evidence="3">
    <location>
        <begin position="941"/>
        <end position="965"/>
    </location>
</feature>
<feature type="topological domain" description="Cytoplasmic" evidence="3">
    <location>
        <begin position="966"/>
        <end position="1251"/>
    </location>
</feature>
<feature type="transmembrane region" description="Helical; Name=S1 of repeat III" evidence="3">
    <location>
        <begin position="1252"/>
        <end position="1274"/>
    </location>
</feature>
<feature type="topological domain" description="Extracellular" evidence="3">
    <location>
        <begin position="1275"/>
        <end position="1292"/>
    </location>
</feature>
<feature type="transmembrane region" description="Helical; Name=S2 of repeat III" evidence="3">
    <location>
        <begin position="1293"/>
        <end position="1313"/>
    </location>
</feature>
<feature type="topological domain" description="Cytoplasmic" evidence="3">
    <location>
        <begin position="1314"/>
        <end position="1323"/>
    </location>
</feature>
<feature type="transmembrane region" description="Helical; Name=S3 of repeat III" evidence="3">
    <location>
        <begin position="1324"/>
        <end position="1343"/>
    </location>
</feature>
<feature type="topological domain" description="Extracellular" evidence="3">
    <location>
        <begin position="1344"/>
        <end position="1357"/>
    </location>
</feature>
<feature type="transmembrane region" description="Helical; Name=S4 of repeat III" evidence="3">
    <location>
        <begin position="1358"/>
        <end position="1379"/>
    </location>
</feature>
<feature type="topological domain" description="Cytoplasmic" evidence="3">
    <location>
        <begin position="1380"/>
        <end position="1389"/>
    </location>
</feature>
<feature type="transmembrane region" description="Helical; Name=S5 of repeat III" evidence="3">
    <location>
        <begin position="1390"/>
        <end position="1413"/>
    </location>
</feature>
<feature type="topological domain" description="Extracellular" evidence="3">
    <location>
        <begin position="1414"/>
        <end position="1490"/>
    </location>
</feature>
<feature type="transmembrane region" description="Helical; Name=S6 of repeat III" evidence="3">
    <location>
        <begin position="1491"/>
        <end position="1516"/>
    </location>
</feature>
<feature type="topological domain" description="Cytoplasmic" evidence="3">
    <location>
        <begin position="1517"/>
        <end position="1578"/>
    </location>
</feature>
<feature type="transmembrane region" description="Helical; Name=S1 of repeat IV" evidence="3">
    <location>
        <begin position="1579"/>
        <end position="1599"/>
    </location>
</feature>
<feature type="topological domain" description="Extracellular" evidence="3">
    <location>
        <begin position="1600"/>
        <end position="1613"/>
    </location>
</feature>
<feature type="transmembrane region" description="Helical; Name=S2 of repeat IV" evidence="3">
    <location>
        <begin position="1614"/>
        <end position="1635"/>
    </location>
</feature>
<feature type="topological domain" description="Cytoplasmic" evidence="3">
    <location>
        <begin position="1636"/>
        <end position="1642"/>
    </location>
</feature>
<feature type="transmembrane region" description="Helical; Name=S3 of repeat IV" evidence="3">
    <location>
        <begin position="1643"/>
        <end position="1661"/>
    </location>
</feature>
<feature type="topological domain" description="Extracellular" evidence="3">
    <location>
        <begin position="1662"/>
        <end position="1675"/>
    </location>
</feature>
<feature type="transmembrane region" description="Helical; Name=S4 of repeat IV" evidence="3">
    <location>
        <begin position="1676"/>
        <end position="1699"/>
    </location>
</feature>
<feature type="topological domain" description="Cytoplasmic" evidence="3">
    <location>
        <begin position="1700"/>
        <end position="1713"/>
    </location>
</feature>
<feature type="transmembrane region" description="Helical; Name=S5 of repeat IV" evidence="3">
    <location>
        <begin position="1714"/>
        <end position="1734"/>
    </location>
</feature>
<feature type="topological domain" description="Extracellular" evidence="3">
    <location>
        <begin position="1735"/>
        <end position="1794"/>
    </location>
</feature>
<feature type="transmembrane region" description="Helical; Name=S6 of repeat IV" evidence="3">
    <location>
        <begin position="1795"/>
        <end position="1822"/>
    </location>
</feature>
<feature type="topological domain" description="Cytoplasmic" evidence="3">
    <location>
        <begin position="1823"/>
        <end position="2254"/>
    </location>
</feature>
<feature type="repeat" description="I">
    <location>
        <begin position="68"/>
        <end position="398"/>
    </location>
</feature>
<feature type="repeat" description="II">
    <location>
        <begin position="730"/>
        <end position="968"/>
    </location>
</feature>
<feature type="repeat" description="III">
    <location>
        <begin position="1242"/>
        <end position="1519"/>
    </location>
</feature>
<feature type="repeat" description="IV">
    <location>
        <begin position="1564"/>
        <end position="1822"/>
    </location>
</feature>
<feature type="region of interest" description="Disordered" evidence="4">
    <location>
        <begin position="1"/>
        <end position="48"/>
    </location>
</feature>
<feature type="region of interest" description="Disordered" evidence="4">
    <location>
        <begin position="494"/>
        <end position="513"/>
    </location>
</feature>
<feature type="region of interest" description="Disordered" evidence="4">
    <location>
        <begin position="525"/>
        <end position="553"/>
    </location>
</feature>
<feature type="region of interest" description="Disordered" evidence="4">
    <location>
        <begin position="579"/>
        <end position="598"/>
    </location>
</feature>
<feature type="region of interest" description="Disordered" evidence="4">
    <location>
        <begin position="699"/>
        <end position="721"/>
    </location>
</feature>
<feature type="region of interest" description="Disordered" evidence="4">
    <location>
        <begin position="1024"/>
        <end position="1209"/>
    </location>
</feature>
<feature type="region of interest" description="Disordered" evidence="4">
    <location>
        <begin position="2153"/>
        <end position="2254"/>
    </location>
</feature>
<feature type="compositionally biased region" description="Polar residues" evidence="4">
    <location>
        <begin position="15"/>
        <end position="24"/>
    </location>
</feature>
<feature type="compositionally biased region" description="Basic residues" evidence="4">
    <location>
        <begin position="494"/>
        <end position="506"/>
    </location>
</feature>
<feature type="compositionally biased region" description="Pro residues" evidence="4">
    <location>
        <begin position="534"/>
        <end position="545"/>
    </location>
</feature>
<feature type="compositionally biased region" description="Low complexity" evidence="4">
    <location>
        <begin position="1041"/>
        <end position="1052"/>
    </location>
</feature>
<feature type="compositionally biased region" description="Low complexity" evidence="4">
    <location>
        <begin position="1065"/>
        <end position="1091"/>
    </location>
</feature>
<feature type="compositionally biased region" description="Acidic residues" evidence="4">
    <location>
        <begin position="1117"/>
        <end position="1126"/>
    </location>
</feature>
<feature type="compositionally biased region" description="Acidic residues" evidence="4">
    <location>
        <begin position="1196"/>
        <end position="1206"/>
    </location>
</feature>
<feature type="compositionally biased region" description="Low complexity" evidence="4">
    <location>
        <begin position="2184"/>
        <end position="2193"/>
    </location>
</feature>
<feature type="compositionally biased region" description="Polar residues" evidence="4">
    <location>
        <begin position="2220"/>
        <end position="2232"/>
    </location>
</feature>
<feature type="compositionally biased region" description="Polar residues" evidence="4">
    <location>
        <begin position="2240"/>
        <end position="2254"/>
    </location>
</feature>
<feature type="site" description="Calcium ion selectivity and permeability" evidence="1">
    <location>
        <position position="354"/>
    </location>
</feature>
<feature type="site" description="Calcium ion selectivity and permeability" evidence="1">
    <location>
        <position position="924"/>
    </location>
</feature>
<feature type="site" description="Calcium ion selectivity and permeability" evidence="1">
    <location>
        <position position="1465"/>
    </location>
</feature>
<feature type="site" description="Calcium ion selectivity and permeability" evidence="1">
    <location>
        <position position="1770"/>
    </location>
</feature>
<feature type="modified residue" description="Phosphoserine" evidence="8">
    <location>
        <position position="467"/>
    </location>
</feature>
<feature type="modified residue" description="Phosphoserine" evidence="8">
    <location>
        <position position="716"/>
    </location>
</feature>
<feature type="modified residue" description="Phosphoserine" evidence="8">
    <location>
        <position position="1118"/>
    </location>
</feature>
<feature type="modified residue" description="Phosphoserine" evidence="8">
    <location>
        <position position="1124"/>
    </location>
</feature>
<feature type="modified residue" description="Phosphoserine" evidence="8">
    <location>
        <position position="1125"/>
    </location>
</feature>
<feature type="glycosylation site" description="N-linked (GlcNAc...) asparagine" evidence="3">
    <location>
        <position position="173"/>
    </location>
</feature>
<feature type="glycosylation site" description="N-linked (GlcNAc...) asparagine" evidence="3">
    <location>
        <position position="246"/>
    </location>
</feature>
<feature type="glycosylation site" description="N-linked (GlcNAc...) asparagine" evidence="3">
    <location>
        <position position="306"/>
    </location>
</feature>
<feature type="glycosylation site" description="N-linked (GlcNAc...) asparagine" evidence="3">
    <location>
        <position position="310"/>
    </location>
</feature>
<feature type="glycosylation site" description="N-linked (GlcNAc...) asparagine" evidence="3">
    <location>
        <position position="322"/>
    </location>
</feature>
<feature type="glycosylation site" description="N-linked (GlcNAc...) asparagine" evidence="3">
    <location>
        <position position="1427"/>
    </location>
</feature>
<feature type="glycosylation site" description="N-linked (GlcNAc...) asparagine" evidence="3">
    <location>
        <position position="1430"/>
    </location>
</feature>
<feature type="glycosylation site" description="N-linked (GlcNAc...) asparagine" evidence="3">
    <location>
        <position position="1666"/>
    </location>
</feature>
<sequence>MDEEEDGAGAEESGQPRSFTQLNDLSGAGGRQGPGSTEKDPGSADSEAEGLPYPALAPVVFFYLSQDSRPRSWCLRTVCNPWFERVSMLVILLNCVTLGMFRPCEDIACDSQRCRILQAFDDFIFAFFAVEMVVKMVALGIFGKKCYLGDTWNRLDFFIVIAGMLEYSLDLQNVSFSAVRTVRVLRPLRAINRVPSMRILVTLLLDTLPMLGNVLLLCFFVFFIFGIVGVQLWAGLLRNRCFLPENFSLPLSVDLEPYYQTENEDESPFICSQPRENGMRSCRSVPTLRGEGGGGPPCSLDYETYNSSSNTTCVNWNQYYTNCSAGEHNPFKGAINFDNIGYAWIAIFQVITLEGWVDIMYFVMDAHSFYNFIYFILLIIVGSFFMINLCLVVIATQFSETKQRESQLMREQRVRFLSNASTLASFSEPGSCYEELLKYLVYILRKAARRLAQVSRAIGVRAGLLSSPVARSGQEPQPSGSCTRSHRRLSVHHLVHHHHHHHHHYHLGNGTLRVPRASPEIQDRDANGSRRLMLPPPSTPTPSGGPPRGAESVHSFYHADCHLEPVRCQAPPPRCPSEASGRTVGSGKVYPTVHTSPPPEILKDKALVEVAPSPGPPTLTSFNIPPGPFSSMHKLLETQSTGACHSSCKISSPCSKADSGACGPDSCPYCARTGAGEPESADHVMPDSDSEAVYEFTQDAQHSDLRDPHSRRRQRSLGPDAEPSSVLAFWRLICDTFRKIVDSKYFGRGIMIAILVNTLSMGIEYHEQPEELTNALEISNIVFTSLFALEMLLKLLVYGPFGYIKNPYNIFDGVIVVISVWEIVGQQGGGLSVLRTFRLMRVLKLVRFLPALQRQLVVLMKTMDNVATFCMLLMLFIFIFSILGMHLFGCKFASERDGDTLPDRKNFDSLLWAIVTVFQILTQEDWNKVLYNGMASTSSWAALYFIALMTFGNYVLFNLLVAILVEGFQAEGDATKSESEPDFFSPSVDGDGDRKKRLALVALGEHAELRKSLLPPLIIHTAATPMSHPKSSSTGVGEALGSGSRRTSSSGSAEPGAAHHEMKCPPSARSSPHSPWSAASSWTSRRSSRNSLGRAPSLKRRSPSGERRSLLSGEGQESQDEEESSEEDRASPAGSDHRHRGSLEREAKSSFDLPDTLQVPGLHRTASGRSSASEHQDCNGKSASGRLARTLRTDDPQLDGDDDNDEGNLSKGERIQAWVRSRLPACCRERDSWSAYIFPPQSRFRLLCHRIITHKMFDHVVLVIIFLNCITIAMERPKIDPHSAERIFLTLSNYIFTAVFLAEMTVKVVALGWCFGEQAYLRSSWNVLDGLLVLISVIDILVSMVSDSGTKILGMLRVLRLLRTLRPLRVISRAQGLKLVVETLMSSLKPIGNIVVICCAFFIIFGILGVQLFKGKFFVCQGEDTRNITNKSDCAEASYRWVRHKYNFDNLGQALMSLFVLASKDGWVDIMYDGLDAVGVDQQPIMNHNPWMLLYFISFLLIVAFFVLNMFVGVVVENFHKCRQHQEEEEARRREEKRLRRLEKKRRSKEKQMAEAQCKPYYSDYSRFRLLVHHLCTSHYLDLFITGVIGLNVVTMAMEHYQQPQILDEALKICNYIFTVIFVFESVFKLVAFGFRRFFQDRWNQLDLAIVLLSIMGITLEEIEVNLSLPINPTIIRIMRVLRIARVLKLLKMAVGMRALLHTVMQALPQVGNLGLLFMLLFFIFAALGVELFGDLECDETHPCEGLGRHATFRNFGMAFLTLFRVSTGDNWNGIMKDTLRDCDQESTCYNTVISPIYFVSFVLTAQFVLVNVVIAVLMKHLEESNKEAKEEAELEAELELEMKTLSPQPHSPLGSPFLWPGVEGVNSTDSPKPGAPHTTAHIGAASGFSLEHPTMVPHPEEVPVPLGPDLLTVRKSGVSRTHSLPNDSYMCRNGSTAERSLGHRGWGLPKAQSGSILSVHSQPADTSCILQLPKDVHYLLQPHGAPTWGAIPKLPPPGRSPLAQRPLRRQAAIRTDSLDVQGLGSREDLLSEVSGPSCPLTRSSSFWGGSSIQVQQRSGIQSKVSKHIRLPAPCPGLEPSWAKDPPETRSSLELDTELSWISGDLLPSSQEEPLFPRDLKKCYSVETQSCRRRPGFWLDEQRRHSIAVSCLDSGSQPRLCPSPSSLGGQPLGGPGSRPKKKLSPPSISIDPPESQGSRPPCSPGVCLRRRAPASDSKDPSVSSPLDSTAASPSPKKDTLSLSGLSSDPTDMDP</sequence>